<accession>Q1GWK6</accession>
<organism>
    <name type="scientific">Sphingopyxis alaskensis (strain DSM 13593 / LMG 18877 / RB2256)</name>
    <name type="common">Sphingomonas alaskensis</name>
    <dbReference type="NCBI Taxonomy" id="317655"/>
    <lineage>
        <taxon>Bacteria</taxon>
        <taxon>Pseudomonadati</taxon>
        <taxon>Pseudomonadota</taxon>
        <taxon>Alphaproteobacteria</taxon>
        <taxon>Sphingomonadales</taxon>
        <taxon>Sphingomonadaceae</taxon>
        <taxon>Sphingopyxis</taxon>
    </lineage>
</organism>
<proteinExistence type="inferred from homology"/>
<comment type="function">
    <text evidence="1">Catalyzes the conversion of heme O to heme A by two successive hydroxylations of the methyl group at C8. The first hydroxylation forms heme I, the second hydroxylation results in an unstable dihydroxymethyl group, which spontaneously dehydrates, resulting in the formyl group of heme A.</text>
</comment>
<comment type="catalytic activity">
    <reaction evidence="1">
        <text>Fe(II)-heme o + 2 A + H2O = Fe(II)-heme a + 2 AH2</text>
        <dbReference type="Rhea" id="RHEA:63388"/>
        <dbReference type="ChEBI" id="CHEBI:13193"/>
        <dbReference type="ChEBI" id="CHEBI:15377"/>
        <dbReference type="ChEBI" id="CHEBI:17499"/>
        <dbReference type="ChEBI" id="CHEBI:60530"/>
        <dbReference type="ChEBI" id="CHEBI:61715"/>
        <dbReference type="EC" id="1.17.99.9"/>
    </reaction>
    <physiologicalReaction direction="left-to-right" evidence="1">
        <dbReference type="Rhea" id="RHEA:63389"/>
    </physiologicalReaction>
</comment>
<comment type="cofactor">
    <cofactor evidence="1">
        <name>heme b</name>
        <dbReference type="ChEBI" id="CHEBI:60344"/>
    </cofactor>
</comment>
<comment type="pathway">
    <text evidence="1">Porphyrin-containing compound metabolism; heme A biosynthesis; heme A from heme O: step 1/1.</text>
</comment>
<comment type="subunit">
    <text evidence="1">Interacts with CtaB.</text>
</comment>
<comment type="subcellular location">
    <subcellularLocation>
        <location evidence="1">Cell membrane</location>
        <topology evidence="1">Multi-pass membrane protein</topology>
    </subcellularLocation>
</comment>
<comment type="similarity">
    <text evidence="1">Belongs to the COX15/CtaA family. Type 2 subfamily.</text>
</comment>
<feature type="chain" id="PRO_0000349086" description="Heme A synthase">
    <location>
        <begin position="1"/>
        <end position="355"/>
    </location>
</feature>
<feature type="transmembrane region" description="Helical" evidence="1">
    <location>
        <begin position="21"/>
        <end position="41"/>
    </location>
</feature>
<feature type="transmembrane region" description="Helical" evidence="1">
    <location>
        <begin position="85"/>
        <end position="102"/>
    </location>
</feature>
<feature type="transmembrane region" description="Helical" evidence="1">
    <location>
        <begin position="136"/>
        <end position="156"/>
    </location>
</feature>
<feature type="transmembrane region" description="Helical" evidence="1">
    <location>
        <begin position="173"/>
        <end position="193"/>
    </location>
</feature>
<feature type="transmembrane region" description="Helical" evidence="1">
    <location>
        <begin position="208"/>
        <end position="228"/>
    </location>
</feature>
<feature type="transmembrane region" description="Helical" evidence="1">
    <location>
        <begin position="264"/>
        <end position="284"/>
    </location>
</feature>
<feature type="transmembrane region" description="Helical" evidence="1">
    <location>
        <begin position="299"/>
        <end position="319"/>
    </location>
</feature>
<feature type="transmembrane region" description="Helical" evidence="1">
    <location>
        <begin position="322"/>
        <end position="342"/>
    </location>
</feature>
<feature type="binding site" description="axial binding residue" evidence="1">
    <location>
        <position position="270"/>
    </location>
    <ligand>
        <name>heme</name>
        <dbReference type="ChEBI" id="CHEBI:30413"/>
    </ligand>
    <ligandPart>
        <name>Fe</name>
        <dbReference type="ChEBI" id="CHEBI:18248"/>
    </ligandPart>
</feature>
<feature type="binding site" description="axial binding residue" evidence="1">
    <location>
        <position position="327"/>
    </location>
    <ligand>
        <name>heme</name>
        <dbReference type="ChEBI" id="CHEBI:30413"/>
    </ligand>
    <ligandPart>
        <name>Fe</name>
        <dbReference type="ChEBI" id="CHEBI:18248"/>
    </ligandPart>
</feature>
<protein>
    <recommendedName>
        <fullName evidence="1">Heme A synthase</fullName>
        <shortName evidence="1">HAS</shortName>
        <ecNumber evidence="1">1.17.99.9</ecNumber>
    </recommendedName>
    <alternativeName>
        <fullName evidence="1">Cytochrome aa3-controlling protein</fullName>
    </alternativeName>
</protein>
<name>CTAA_SPHAL</name>
<gene>
    <name evidence="1" type="primary">ctaA</name>
    <name type="ordered locus">Sala_0242</name>
</gene>
<keyword id="KW-1003">Cell membrane</keyword>
<keyword id="KW-0350">Heme biosynthesis</keyword>
<keyword id="KW-0408">Iron</keyword>
<keyword id="KW-0472">Membrane</keyword>
<keyword id="KW-0479">Metal-binding</keyword>
<keyword id="KW-0560">Oxidoreductase</keyword>
<keyword id="KW-1185">Reference proteome</keyword>
<keyword id="KW-0812">Transmembrane</keyword>
<keyword id="KW-1133">Transmembrane helix</keyword>
<evidence type="ECO:0000255" key="1">
    <source>
        <dbReference type="HAMAP-Rule" id="MF_01665"/>
    </source>
</evidence>
<dbReference type="EC" id="1.17.99.9" evidence="1"/>
<dbReference type="EMBL" id="CP000356">
    <property type="protein sequence ID" value="ABF51966.1"/>
    <property type="molecule type" value="Genomic_DNA"/>
</dbReference>
<dbReference type="RefSeq" id="WP_011540558.1">
    <property type="nucleotide sequence ID" value="NC_008048.1"/>
</dbReference>
<dbReference type="SMR" id="Q1GWK6"/>
<dbReference type="STRING" id="317655.Sala_0242"/>
<dbReference type="KEGG" id="sal:Sala_0242"/>
<dbReference type="eggNOG" id="COG1612">
    <property type="taxonomic scope" value="Bacteria"/>
</dbReference>
<dbReference type="HOGENOM" id="CLU_017627_0_0_5"/>
<dbReference type="OrthoDB" id="9793156at2"/>
<dbReference type="UniPathway" id="UPA00269">
    <property type="reaction ID" value="UER00713"/>
</dbReference>
<dbReference type="Proteomes" id="UP000006578">
    <property type="component" value="Chromosome"/>
</dbReference>
<dbReference type="GO" id="GO:0005886">
    <property type="term" value="C:plasma membrane"/>
    <property type="evidence" value="ECO:0007669"/>
    <property type="project" value="UniProtKB-SubCell"/>
</dbReference>
<dbReference type="GO" id="GO:0046872">
    <property type="term" value="F:metal ion binding"/>
    <property type="evidence" value="ECO:0007669"/>
    <property type="project" value="UniProtKB-KW"/>
</dbReference>
<dbReference type="GO" id="GO:0016653">
    <property type="term" value="F:oxidoreductase activity, acting on NAD(P)H, heme protein as acceptor"/>
    <property type="evidence" value="ECO:0007669"/>
    <property type="project" value="InterPro"/>
</dbReference>
<dbReference type="GO" id="GO:0006784">
    <property type="term" value="P:heme A biosynthetic process"/>
    <property type="evidence" value="ECO:0007669"/>
    <property type="project" value="UniProtKB-UniRule"/>
</dbReference>
<dbReference type="HAMAP" id="MF_01665">
    <property type="entry name" value="HemeA_synth_type2"/>
    <property type="match status" value="1"/>
</dbReference>
<dbReference type="InterPro" id="IPR003780">
    <property type="entry name" value="COX15/CtaA_fam"/>
</dbReference>
<dbReference type="InterPro" id="IPR023754">
    <property type="entry name" value="HemeA_Synthase_type2"/>
</dbReference>
<dbReference type="PANTHER" id="PTHR23289">
    <property type="entry name" value="CYTOCHROME C OXIDASE ASSEMBLY PROTEIN COX15"/>
    <property type="match status" value="1"/>
</dbReference>
<dbReference type="PANTHER" id="PTHR23289:SF2">
    <property type="entry name" value="CYTOCHROME C OXIDASE ASSEMBLY PROTEIN COX15 HOMOLOG"/>
    <property type="match status" value="1"/>
</dbReference>
<dbReference type="Pfam" id="PF02628">
    <property type="entry name" value="COX15-CtaA"/>
    <property type="match status" value="1"/>
</dbReference>
<sequence>MTNSSALSPSSSAVAPRPGALARWLWAVALLVIIVVGVGGITRLTESGLSITEWRPVSGVLPPLNEADWVREFEKYKQIPEYKEINLGMTLAGFKAIFFWEWLHRILGRVVGMALVVPFVWYAWRRAIPAGYGWRLFALTALVGLQGAIGWWMVASGLEYRTDVSHYRLAAHLLTALFLLAGLVWTARDLGALARDPGAPPARLTGAAIGVIAILFVQLLLGAWVAGLNAGYVSSSWPLMNDHFVPEGIDWSGGAWLALTNDPFLIHFLHRWWSWAAAGALLLLARTLARRGARAEACALVIVVAAQMLLGIWTIVSGVSMWVAVMHQVVGAILVAVTAAALHRLGRRSAITEVS</sequence>
<reference key="1">
    <citation type="journal article" date="2009" name="Proc. Natl. Acad. Sci. U.S.A.">
        <title>The genomic basis of trophic strategy in marine bacteria.</title>
        <authorList>
            <person name="Lauro F.M."/>
            <person name="McDougald D."/>
            <person name="Thomas T."/>
            <person name="Williams T.J."/>
            <person name="Egan S."/>
            <person name="Rice S."/>
            <person name="DeMaere M.Z."/>
            <person name="Ting L."/>
            <person name="Ertan H."/>
            <person name="Johnson J."/>
            <person name="Ferriera S."/>
            <person name="Lapidus A."/>
            <person name="Anderson I."/>
            <person name="Kyrpides N."/>
            <person name="Munk A.C."/>
            <person name="Detter C."/>
            <person name="Han C.S."/>
            <person name="Brown M.V."/>
            <person name="Robb F.T."/>
            <person name="Kjelleberg S."/>
            <person name="Cavicchioli R."/>
        </authorList>
    </citation>
    <scope>NUCLEOTIDE SEQUENCE [LARGE SCALE GENOMIC DNA]</scope>
    <source>
        <strain>DSM 13593 / LMG 18877 / RB2256</strain>
    </source>
</reference>